<accession>B9KI91</accession>
<organism>
    <name type="scientific">Anaplasma marginale (strain Florida)</name>
    <dbReference type="NCBI Taxonomy" id="320483"/>
    <lineage>
        <taxon>Bacteria</taxon>
        <taxon>Pseudomonadati</taxon>
        <taxon>Pseudomonadota</taxon>
        <taxon>Alphaproteobacteria</taxon>
        <taxon>Rickettsiales</taxon>
        <taxon>Anaplasmataceae</taxon>
        <taxon>Anaplasma</taxon>
    </lineage>
</organism>
<evidence type="ECO:0000255" key="1">
    <source>
        <dbReference type="HAMAP-Rule" id="MF_01356"/>
    </source>
</evidence>
<protein>
    <recommendedName>
        <fullName evidence="1">NADH-quinone oxidoreductase subunit B</fullName>
        <ecNumber evidence="1">7.1.1.-</ecNumber>
    </recommendedName>
    <alternativeName>
        <fullName evidence="1">NADH dehydrogenase I subunit B</fullName>
    </alternativeName>
    <alternativeName>
        <fullName evidence="1">NDH-1 subunit B</fullName>
    </alternativeName>
</protein>
<name>NUOB_ANAMF</name>
<feature type="chain" id="PRO_0000376122" description="NADH-quinone oxidoreductase subunit B">
    <location>
        <begin position="1"/>
        <end position="190"/>
    </location>
</feature>
<feature type="binding site" evidence="1">
    <location>
        <position position="67"/>
    </location>
    <ligand>
        <name>[4Fe-4S] cluster</name>
        <dbReference type="ChEBI" id="CHEBI:49883"/>
    </ligand>
</feature>
<feature type="binding site" evidence="1">
    <location>
        <position position="68"/>
    </location>
    <ligand>
        <name>[4Fe-4S] cluster</name>
        <dbReference type="ChEBI" id="CHEBI:49883"/>
    </ligand>
</feature>
<feature type="binding site" evidence="1">
    <location>
        <position position="132"/>
    </location>
    <ligand>
        <name>[4Fe-4S] cluster</name>
        <dbReference type="ChEBI" id="CHEBI:49883"/>
    </ligand>
</feature>
<feature type="binding site" evidence="1">
    <location>
        <position position="162"/>
    </location>
    <ligand>
        <name>[4Fe-4S] cluster</name>
        <dbReference type="ChEBI" id="CHEBI:49883"/>
    </ligand>
</feature>
<dbReference type="EC" id="7.1.1.-" evidence="1"/>
<dbReference type="EMBL" id="CP001079">
    <property type="protein sequence ID" value="ACM49203.1"/>
    <property type="molecule type" value="Genomic_DNA"/>
</dbReference>
<dbReference type="SMR" id="B9KI91"/>
<dbReference type="STRING" id="320483.AMF_333"/>
<dbReference type="KEGG" id="amf:AMF_333"/>
<dbReference type="eggNOG" id="COG0377">
    <property type="taxonomic scope" value="Bacteria"/>
</dbReference>
<dbReference type="HOGENOM" id="CLU_055737_7_0_5"/>
<dbReference type="Proteomes" id="UP000007307">
    <property type="component" value="Chromosome"/>
</dbReference>
<dbReference type="GO" id="GO:0005886">
    <property type="term" value="C:plasma membrane"/>
    <property type="evidence" value="ECO:0007669"/>
    <property type="project" value="UniProtKB-SubCell"/>
</dbReference>
<dbReference type="GO" id="GO:0045271">
    <property type="term" value="C:respiratory chain complex I"/>
    <property type="evidence" value="ECO:0007669"/>
    <property type="project" value="TreeGrafter"/>
</dbReference>
<dbReference type="GO" id="GO:0051539">
    <property type="term" value="F:4 iron, 4 sulfur cluster binding"/>
    <property type="evidence" value="ECO:0007669"/>
    <property type="project" value="UniProtKB-KW"/>
</dbReference>
<dbReference type="GO" id="GO:0005506">
    <property type="term" value="F:iron ion binding"/>
    <property type="evidence" value="ECO:0007669"/>
    <property type="project" value="UniProtKB-UniRule"/>
</dbReference>
<dbReference type="GO" id="GO:0008137">
    <property type="term" value="F:NADH dehydrogenase (ubiquinone) activity"/>
    <property type="evidence" value="ECO:0007669"/>
    <property type="project" value="InterPro"/>
</dbReference>
<dbReference type="GO" id="GO:0050136">
    <property type="term" value="F:NADH:ubiquinone reductase (non-electrogenic) activity"/>
    <property type="evidence" value="ECO:0007669"/>
    <property type="project" value="UniProtKB-UniRule"/>
</dbReference>
<dbReference type="GO" id="GO:0048038">
    <property type="term" value="F:quinone binding"/>
    <property type="evidence" value="ECO:0007669"/>
    <property type="project" value="UniProtKB-KW"/>
</dbReference>
<dbReference type="GO" id="GO:0009060">
    <property type="term" value="P:aerobic respiration"/>
    <property type="evidence" value="ECO:0007669"/>
    <property type="project" value="TreeGrafter"/>
</dbReference>
<dbReference type="GO" id="GO:0015990">
    <property type="term" value="P:electron transport coupled proton transport"/>
    <property type="evidence" value="ECO:0007669"/>
    <property type="project" value="TreeGrafter"/>
</dbReference>
<dbReference type="FunFam" id="3.40.50.12280:FF:000001">
    <property type="entry name" value="NADH-quinone oxidoreductase subunit B 2"/>
    <property type="match status" value="1"/>
</dbReference>
<dbReference type="Gene3D" id="3.40.50.12280">
    <property type="match status" value="1"/>
</dbReference>
<dbReference type="HAMAP" id="MF_01356">
    <property type="entry name" value="NDH1_NuoB"/>
    <property type="match status" value="1"/>
</dbReference>
<dbReference type="InterPro" id="IPR006137">
    <property type="entry name" value="NADH_UbQ_OxRdtase-like_20kDa"/>
</dbReference>
<dbReference type="InterPro" id="IPR006138">
    <property type="entry name" value="NADH_UQ_OxRdtase_20Kd_su"/>
</dbReference>
<dbReference type="NCBIfam" id="TIGR01957">
    <property type="entry name" value="nuoB_fam"/>
    <property type="match status" value="1"/>
</dbReference>
<dbReference type="NCBIfam" id="NF005012">
    <property type="entry name" value="PRK06411.1"/>
    <property type="match status" value="1"/>
</dbReference>
<dbReference type="PANTHER" id="PTHR11995">
    <property type="entry name" value="NADH DEHYDROGENASE"/>
    <property type="match status" value="1"/>
</dbReference>
<dbReference type="PANTHER" id="PTHR11995:SF14">
    <property type="entry name" value="NADH DEHYDROGENASE [UBIQUINONE] IRON-SULFUR PROTEIN 7, MITOCHONDRIAL"/>
    <property type="match status" value="1"/>
</dbReference>
<dbReference type="Pfam" id="PF01058">
    <property type="entry name" value="Oxidored_q6"/>
    <property type="match status" value="1"/>
</dbReference>
<dbReference type="SUPFAM" id="SSF56770">
    <property type="entry name" value="HydA/Nqo6-like"/>
    <property type="match status" value="1"/>
</dbReference>
<dbReference type="PROSITE" id="PS01150">
    <property type="entry name" value="COMPLEX1_20K"/>
    <property type="match status" value="1"/>
</dbReference>
<reference key="1">
    <citation type="journal article" date="2009" name="BMC Genomics">
        <title>Conservation in the face of diversity: multistrain analysis of an intracellular bacterium.</title>
        <authorList>
            <person name="Dark M.J."/>
            <person name="Herndon D.R."/>
            <person name="Kappmeyer L.S."/>
            <person name="Gonzales M.P."/>
            <person name="Nordeen E."/>
            <person name="Palmer G.H."/>
            <person name="Knowles D.P. Jr."/>
            <person name="Brayton K.A."/>
        </authorList>
    </citation>
    <scope>NUCLEOTIDE SEQUENCE [LARGE SCALE GENOMIC DNA]</scope>
    <source>
        <strain>Florida</strain>
    </source>
</reference>
<keyword id="KW-0004">4Fe-4S</keyword>
<keyword id="KW-0997">Cell inner membrane</keyword>
<keyword id="KW-1003">Cell membrane</keyword>
<keyword id="KW-0408">Iron</keyword>
<keyword id="KW-0411">Iron-sulfur</keyword>
<keyword id="KW-0472">Membrane</keyword>
<keyword id="KW-0479">Metal-binding</keyword>
<keyword id="KW-0520">NAD</keyword>
<keyword id="KW-0874">Quinone</keyword>
<keyword id="KW-1185">Reference proteome</keyword>
<keyword id="KW-1278">Translocase</keyword>
<keyword id="KW-0813">Transport</keyword>
<keyword id="KW-0830">Ubiquinone</keyword>
<proteinExistence type="inferred from homology"/>
<gene>
    <name evidence="1" type="primary">nuoB</name>
    <name type="ordered locus">AMF_333</name>
</gene>
<comment type="function">
    <text evidence="1">NDH-1 shuttles electrons from NADH, via FMN and iron-sulfur (Fe-S) centers, to quinones in the respiratory chain. The immediate electron acceptor for the enzyme in this species is believed to be ubiquinone. Couples the redox reaction to proton translocation (for every two electrons transferred, four hydrogen ions are translocated across the cytoplasmic membrane), and thus conserves the redox energy in a proton gradient.</text>
</comment>
<comment type="catalytic activity">
    <reaction evidence="1">
        <text>a quinone + NADH + 5 H(+)(in) = a quinol + NAD(+) + 4 H(+)(out)</text>
        <dbReference type="Rhea" id="RHEA:57888"/>
        <dbReference type="ChEBI" id="CHEBI:15378"/>
        <dbReference type="ChEBI" id="CHEBI:24646"/>
        <dbReference type="ChEBI" id="CHEBI:57540"/>
        <dbReference type="ChEBI" id="CHEBI:57945"/>
        <dbReference type="ChEBI" id="CHEBI:132124"/>
    </reaction>
</comment>
<comment type="cofactor">
    <cofactor evidence="1">
        <name>[4Fe-4S] cluster</name>
        <dbReference type="ChEBI" id="CHEBI:49883"/>
    </cofactor>
    <text evidence="1">Binds 1 [4Fe-4S] cluster.</text>
</comment>
<comment type="subunit">
    <text evidence="1">NDH-1 is composed of 14 different subunits. Subunits NuoB, C, D, E, F, and G constitute the peripheral sector of the complex.</text>
</comment>
<comment type="subcellular location">
    <subcellularLocation>
        <location evidence="1">Cell inner membrane</location>
        <topology evidence="1">Peripheral membrane protein</topology>
        <orientation evidence="1">Cytoplasmic side</orientation>
    </subcellularLocation>
</comment>
<comment type="similarity">
    <text evidence="1">Belongs to the complex I 20 kDa subunit family.</text>
</comment>
<sequence length="190" mass="21036">MFTNGASVPLSGSKDMENQQHQVLEQELWQGYKDRGFVVTKFSDLVDSVVRWSRSGSLWPMTFGLACCAVEMMHTAASRYDLDRYGVMFRASPRQADVMIVAGTLTNKMAPALRRVYDQMAEPKYVISMGSCANGGGYYHYSYSVVRGCDRIVPVDIYVPGCPPTAEALLYGILCLQQKIIRGNPGVRGA</sequence>